<evidence type="ECO:0000255" key="1">
    <source>
        <dbReference type="HAMAP-Rule" id="MF_00332"/>
    </source>
</evidence>
<evidence type="ECO:0000256" key="2">
    <source>
        <dbReference type="SAM" id="MobiDB-lite"/>
    </source>
</evidence>
<protein>
    <recommendedName>
        <fullName evidence="1">Chaperone protein DnaK</fullName>
    </recommendedName>
    <alternativeName>
        <fullName evidence="1">HSP70</fullName>
    </alternativeName>
    <alternativeName>
        <fullName evidence="1">Heat shock 70 kDa protein</fullName>
    </alternativeName>
    <alternativeName>
        <fullName evidence="1">Heat shock protein 70</fullName>
    </alternativeName>
</protein>
<comment type="function">
    <text evidence="1">Acts as a chaperone.</text>
</comment>
<comment type="induction">
    <text evidence="1">By stress conditions e.g. heat shock.</text>
</comment>
<comment type="similarity">
    <text evidence="1">Belongs to the heat shock protein 70 family.</text>
</comment>
<reference key="1">
    <citation type="journal article" date="2005" name="Nucleic Acids Res.">
        <title>Genome dynamics and diversity of Shigella species, the etiologic agents of bacillary dysentery.</title>
        <authorList>
            <person name="Yang F."/>
            <person name="Yang J."/>
            <person name="Zhang X."/>
            <person name="Chen L."/>
            <person name="Jiang Y."/>
            <person name="Yan Y."/>
            <person name="Tang X."/>
            <person name="Wang J."/>
            <person name="Xiong Z."/>
            <person name="Dong J."/>
            <person name="Xue Y."/>
            <person name="Zhu Y."/>
            <person name="Xu X."/>
            <person name="Sun L."/>
            <person name="Chen S."/>
            <person name="Nie H."/>
            <person name="Peng J."/>
            <person name="Xu J."/>
            <person name="Wang Y."/>
            <person name="Yuan Z."/>
            <person name="Wen Y."/>
            <person name="Yao Z."/>
            <person name="Shen Y."/>
            <person name="Qiang B."/>
            <person name="Hou Y."/>
            <person name="Yu J."/>
            <person name="Jin Q."/>
        </authorList>
    </citation>
    <scope>NUCLEOTIDE SEQUENCE [LARGE SCALE GENOMIC DNA]</scope>
    <source>
        <strain>Sb227</strain>
    </source>
</reference>
<organism>
    <name type="scientific">Shigella boydii serotype 4 (strain Sb227)</name>
    <dbReference type="NCBI Taxonomy" id="300268"/>
    <lineage>
        <taxon>Bacteria</taxon>
        <taxon>Pseudomonadati</taxon>
        <taxon>Pseudomonadota</taxon>
        <taxon>Gammaproteobacteria</taxon>
        <taxon>Enterobacterales</taxon>
        <taxon>Enterobacteriaceae</taxon>
        <taxon>Shigella</taxon>
    </lineage>
</organism>
<name>DNAK_SHIBS</name>
<gene>
    <name evidence="1" type="primary">dnaK</name>
    <name type="ordered locus">SBO_0015</name>
</gene>
<proteinExistence type="inferred from homology"/>
<accession>Q326K7</accession>
<sequence>MGKIIGIDLGTTNSCVAIMDGTTPRVLENAEGDRTTPSIIAYTQDGETLVGQPAKRQAVTNPQNTLFAIKRLIGRRFQDEEVQRDVSIMPFKIIAADNGDAWVEVKGQKMAPPQISAEVLKKMKKTAEDYLGEPVTEAVITVPAYFNDAQRQATKDAGRIAGLEVKRIINEPTAAALAYGLDKGTGNRTIAVYDLGGGTFDISIIEIDEVDGEKTFEVLATNGDTHLGGEDFDSRLINYLVEEFKKDQGIDLRNDPLAMQRLKEAAEKAKIELSSAQQTDVNLPYITADATGPKHMNIKVTRAKLESLVEDLVNRSIEPLKVALQDAGLSVSDIDDVILVGGQTRMPMVQKKVAEFFGKEPRKDVNPDEAVAIGAAVQGGVLTGDVKDVLLLDVTPLSLGIETMGGVMTTLIAKNTTIPTKHSQVFSTAEDNQSAVTIHVLQGERKRAADNKSLGQFNLDGINPAPRGMPQIEVTFDIDADGILHVSAKDKNSGKEQKITIKASSGLNEDEIQKMVRDAEANAEADRKFEELVQTRNQGDHLLHSTRKQVEEAGDKLPADDKTAIESALTALETALKGEDKAAIEAKMQELAQVSQKLMEIAQQQHAQQQTAGADASANNAKDDDVVDAEFEEVKDKK</sequence>
<keyword id="KW-0007">Acetylation</keyword>
<keyword id="KW-0067">ATP-binding</keyword>
<keyword id="KW-0143">Chaperone</keyword>
<keyword id="KW-0547">Nucleotide-binding</keyword>
<keyword id="KW-0597">Phosphoprotein</keyword>
<keyword id="KW-0346">Stress response</keyword>
<feature type="chain" id="PRO_0000226008" description="Chaperone protein DnaK">
    <location>
        <begin position="1"/>
        <end position="638"/>
    </location>
</feature>
<feature type="region of interest" description="Disordered" evidence="2">
    <location>
        <begin position="602"/>
        <end position="638"/>
    </location>
</feature>
<feature type="compositionally biased region" description="Low complexity" evidence="2">
    <location>
        <begin position="602"/>
        <end position="620"/>
    </location>
</feature>
<feature type="modified residue" description="N6-acetyllysine" evidence="1">
    <location>
        <position position="109"/>
    </location>
</feature>
<feature type="modified residue" description="Phosphothreonine; by autocatalysis" evidence="1">
    <location>
        <position position="199"/>
    </location>
</feature>
<feature type="modified residue" description="N6-acetyllysine" evidence="1">
    <location>
        <position position="245"/>
    </location>
</feature>
<feature type="modified residue" description="N6-acetyllysine" evidence="1">
    <location>
        <position position="304"/>
    </location>
</feature>
<feature type="modified residue" description="N6-acetyllysine" evidence="1">
    <location>
        <position position="421"/>
    </location>
</feature>
<feature type="modified residue" description="N6-acetyllysine" evidence="1">
    <location>
        <position position="556"/>
    </location>
</feature>
<dbReference type="EMBL" id="CP000036">
    <property type="protein sequence ID" value="ABB64751.1"/>
    <property type="molecule type" value="Genomic_DNA"/>
</dbReference>
<dbReference type="RefSeq" id="WP_000516135.1">
    <property type="nucleotide sequence ID" value="NC_007613.1"/>
</dbReference>
<dbReference type="SMR" id="Q326K7"/>
<dbReference type="GeneID" id="93777429"/>
<dbReference type="KEGG" id="sbo:SBO_0015"/>
<dbReference type="HOGENOM" id="CLU_005965_2_1_6"/>
<dbReference type="Proteomes" id="UP000007067">
    <property type="component" value="Chromosome"/>
</dbReference>
<dbReference type="GO" id="GO:0005524">
    <property type="term" value="F:ATP binding"/>
    <property type="evidence" value="ECO:0007669"/>
    <property type="project" value="UniProtKB-UniRule"/>
</dbReference>
<dbReference type="GO" id="GO:0140662">
    <property type="term" value="F:ATP-dependent protein folding chaperone"/>
    <property type="evidence" value="ECO:0007669"/>
    <property type="project" value="InterPro"/>
</dbReference>
<dbReference type="GO" id="GO:0051082">
    <property type="term" value="F:unfolded protein binding"/>
    <property type="evidence" value="ECO:0007669"/>
    <property type="project" value="InterPro"/>
</dbReference>
<dbReference type="CDD" id="cd10234">
    <property type="entry name" value="ASKHA_NBD_HSP70_DnaK-like"/>
    <property type="match status" value="1"/>
</dbReference>
<dbReference type="FunFam" id="2.60.34.10:FF:000014">
    <property type="entry name" value="Chaperone protein DnaK HSP70"/>
    <property type="match status" value="1"/>
</dbReference>
<dbReference type="FunFam" id="1.20.1270.10:FF:000001">
    <property type="entry name" value="Molecular chaperone DnaK"/>
    <property type="match status" value="1"/>
</dbReference>
<dbReference type="FunFam" id="3.30.420.40:FF:000004">
    <property type="entry name" value="Molecular chaperone DnaK"/>
    <property type="match status" value="1"/>
</dbReference>
<dbReference type="FunFam" id="3.90.640.10:FF:000003">
    <property type="entry name" value="Molecular chaperone DnaK"/>
    <property type="match status" value="1"/>
</dbReference>
<dbReference type="Gene3D" id="1.20.1270.10">
    <property type="match status" value="1"/>
</dbReference>
<dbReference type="Gene3D" id="3.30.420.40">
    <property type="match status" value="2"/>
</dbReference>
<dbReference type="Gene3D" id="3.90.640.10">
    <property type="entry name" value="Actin, Chain A, domain 4"/>
    <property type="match status" value="1"/>
</dbReference>
<dbReference type="Gene3D" id="2.60.34.10">
    <property type="entry name" value="Substrate Binding Domain Of DNAk, Chain A, domain 1"/>
    <property type="match status" value="1"/>
</dbReference>
<dbReference type="HAMAP" id="MF_00332">
    <property type="entry name" value="DnaK"/>
    <property type="match status" value="1"/>
</dbReference>
<dbReference type="InterPro" id="IPR043129">
    <property type="entry name" value="ATPase_NBD"/>
</dbReference>
<dbReference type="InterPro" id="IPR012725">
    <property type="entry name" value="Chaperone_DnaK"/>
</dbReference>
<dbReference type="InterPro" id="IPR018181">
    <property type="entry name" value="Heat_shock_70_CS"/>
</dbReference>
<dbReference type="InterPro" id="IPR029048">
    <property type="entry name" value="HSP70_C_sf"/>
</dbReference>
<dbReference type="InterPro" id="IPR029047">
    <property type="entry name" value="HSP70_peptide-bd_sf"/>
</dbReference>
<dbReference type="InterPro" id="IPR013126">
    <property type="entry name" value="Hsp_70_fam"/>
</dbReference>
<dbReference type="NCBIfam" id="NF001413">
    <property type="entry name" value="PRK00290.1"/>
    <property type="match status" value="1"/>
</dbReference>
<dbReference type="NCBIfam" id="NF003520">
    <property type="entry name" value="PRK05183.1"/>
    <property type="match status" value="1"/>
</dbReference>
<dbReference type="NCBIfam" id="TIGR02350">
    <property type="entry name" value="prok_dnaK"/>
    <property type="match status" value="1"/>
</dbReference>
<dbReference type="PANTHER" id="PTHR19375">
    <property type="entry name" value="HEAT SHOCK PROTEIN 70KDA"/>
    <property type="match status" value="1"/>
</dbReference>
<dbReference type="Pfam" id="PF00012">
    <property type="entry name" value="HSP70"/>
    <property type="match status" value="1"/>
</dbReference>
<dbReference type="PRINTS" id="PR00301">
    <property type="entry name" value="HEATSHOCK70"/>
</dbReference>
<dbReference type="SUPFAM" id="SSF53067">
    <property type="entry name" value="Actin-like ATPase domain"/>
    <property type="match status" value="2"/>
</dbReference>
<dbReference type="SUPFAM" id="SSF100934">
    <property type="entry name" value="Heat shock protein 70kD (HSP70), C-terminal subdomain"/>
    <property type="match status" value="1"/>
</dbReference>
<dbReference type="SUPFAM" id="SSF100920">
    <property type="entry name" value="Heat shock protein 70kD (HSP70), peptide-binding domain"/>
    <property type="match status" value="1"/>
</dbReference>
<dbReference type="PROSITE" id="PS00297">
    <property type="entry name" value="HSP70_1"/>
    <property type="match status" value="1"/>
</dbReference>
<dbReference type="PROSITE" id="PS00329">
    <property type="entry name" value="HSP70_2"/>
    <property type="match status" value="1"/>
</dbReference>
<dbReference type="PROSITE" id="PS01036">
    <property type="entry name" value="HSP70_3"/>
    <property type="match status" value="1"/>
</dbReference>